<reference key="1">
    <citation type="submission" date="2006-11" db="EMBL/GenBank/DDBJ databases">
        <title>Identification and characterization of a new conjugation/ type IVA secretion system (trb/tra) of L. pneumophila Corby localized on a mobile genomic island.</title>
        <authorList>
            <person name="Gloeckner G."/>
            <person name="Albert-Weissenberger C."/>
            <person name="Weinmann E."/>
            <person name="Jacobi S."/>
            <person name="Schunder E."/>
            <person name="Steinert M."/>
            <person name="Buchrieser C."/>
            <person name="Hacker J."/>
            <person name="Heuner K."/>
        </authorList>
    </citation>
    <scope>NUCLEOTIDE SEQUENCE [LARGE SCALE GENOMIC DNA]</scope>
    <source>
        <strain>Corby</strain>
    </source>
</reference>
<organism>
    <name type="scientific">Legionella pneumophila (strain Corby)</name>
    <dbReference type="NCBI Taxonomy" id="400673"/>
    <lineage>
        <taxon>Bacteria</taxon>
        <taxon>Pseudomonadati</taxon>
        <taxon>Pseudomonadota</taxon>
        <taxon>Gammaproteobacteria</taxon>
        <taxon>Legionellales</taxon>
        <taxon>Legionellaceae</taxon>
        <taxon>Legionella</taxon>
    </lineage>
</organism>
<evidence type="ECO:0000255" key="1">
    <source>
        <dbReference type="HAMAP-Rule" id="MF_00041"/>
    </source>
</evidence>
<feature type="chain" id="PRO_0000332843" description="Cysteine--tRNA ligase">
    <location>
        <begin position="1"/>
        <end position="456"/>
    </location>
</feature>
<feature type="short sequence motif" description="'HIGH' region">
    <location>
        <begin position="30"/>
        <end position="40"/>
    </location>
</feature>
<feature type="short sequence motif" description="'KMSKS' region">
    <location>
        <begin position="266"/>
        <end position="270"/>
    </location>
</feature>
<feature type="binding site" evidence="1">
    <location>
        <position position="28"/>
    </location>
    <ligand>
        <name>Zn(2+)</name>
        <dbReference type="ChEBI" id="CHEBI:29105"/>
    </ligand>
</feature>
<feature type="binding site" evidence="1">
    <location>
        <position position="209"/>
    </location>
    <ligand>
        <name>Zn(2+)</name>
        <dbReference type="ChEBI" id="CHEBI:29105"/>
    </ligand>
</feature>
<feature type="binding site" evidence="1">
    <location>
        <position position="234"/>
    </location>
    <ligand>
        <name>Zn(2+)</name>
        <dbReference type="ChEBI" id="CHEBI:29105"/>
    </ligand>
</feature>
<feature type="binding site" evidence="1">
    <location>
        <position position="238"/>
    </location>
    <ligand>
        <name>Zn(2+)</name>
        <dbReference type="ChEBI" id="CHEBI:29105"/>
    </ligand>
</feature>
<feature type="binding site" evidence="1">
    <location>
        <position position="269"/>
    </location>
    <ligand>
        <name>ATP</name>
        <dbReference type="ChEBI" id="CHEBI:30616"/>
    </ligand>
</feature>
<proteinExistence type="inferred from homology"/>
<comment type="catalytic activity">
    <reaction evidence="1">
        <text>tRNA(Cys) + L-cysteine + ATP = L-cysteinyl-tRNA(Cys) + AMP + diphosphate</text>
        <dbReference type="Rhea" id="RHEA:17773"/>
        <dbReference type="Rhea" id="RHEA-COMP:9661"/>
        <dbReference type="Rhea" id="RHEA-COMP:9679"/>
        <dbReference type="ChEBI" id="CHEBI:30616"/>
        <dbReference type="ChEBI" id="CHEBI:33019"/>
        <dbReference type="ChEBI" id="CHEBI:35235"/>
        <dbReference type="ChEBI" id="CHEBI:78442"/>
        <dbReference type="ChEBI" id="CHEBI:78517"/>
        <dbReference type="ChEBI" id="CHEBI:456215"/>
        <dbReference type="EC" id="6.1.1.16"/>
    </reaction>
</comment>
<comment type="cofactor">
    <cofactor evidence="1">
        <name>Zn(2+)</name>
        <dbReference type="ChEBI" id="CHEBI:29105"/>
    </cofactor>
    <text evidence="1">Binds 1 zinc ion per subunit.</text>
</comment>
<comment type="subunit">
    <text evidence="1">Monomer.</text>
</comment>
<comment type="subcellular location">
    <subcellularLocation>
        <location evidence="1">Cytoplasm</location>
    </subcellularLocation>
</comment>
<comment type="similarity">
    <text evidence="1">Belongs to the class-I aminoacyl-tRNA synthetase family.</text>
</comment>
<sequence length="456" mass="51646">MLHLYNSLTRKKEPFVSLRPGKIGMYVCGITVYDHCHLGHARSMVAFDVMVRYLRSQGFDVTYVRNITDIDDKIIARASERDVSIDELTAQYIDAMNNDTHALNILPPDHEPRATGHIETIIRLIQRLLEKGSAYVSENGDVCYEVDTFPEYGKLSHKDIEGLVSGSRVEIVKEKRSPLDFVLWKKAKPGEPSWPSPWGEGRPGWHIECSAMAMHELGEQFDIHGGGLDLQFPHHENEIAQSEAATGKPFANYWLHVGMLQVNGEKMAKSIGNFYTIADVLKEHHPEVIRYFLLSSHYRSPLNYSEENLLNAKKALIRLYQAVKDVPPQTADSKLDEYWQEQFNQAMNDDFNTPVALSVLFQLAHEVNKSNSPALAHTLKNLAGILGFLQKDPESFLQSGLAEEEKLVIEQLIAERLQARAERNWAKADQIRTDLLSKGIELEDGATGTTWRRIAE</sequence>
<dbReference type="EC" id="6.1.1.16" evidence="1"/>
<dbReference type="EMBL" id="CP000675">
    <property type="protein sequence ID" value="ABQ54710.1"/>
    <property type="molecule type" value="Genomic_DNA"/>
</dbReference>
<dbReference type="RefSeq" id="WP_011946354.1">
    <property type="nucleotide sequence ID" value="NC_009494.2"/>
</dbReference>
<dbReference type="SMR" id="A5IBG0"/>
<dbReference type="KEGG" id="lpc:LPC_0732"/>
<dbReference type="HOGENOM" id="CLU_013528_0_1_6"/>
<dbReference type="GO" id="GO:0005829">
    <property type="term" value="C:cytosol"/>
    <property type="evidence" value="ECO:0007669"/>
    <property type="project" value="TreeGrafter"/>
</dbReference>
<dbReference type="GO" id="GO:0005524">
    <property type="term" value="F:ATP binding"/>
    <property type="evidence" value="ECO:0007669"/>
    <property type="project" value="UniProtKB-UniRule"/>
</dbReference>
<dbReference type="GO" id="GO:0004817">
    <property type="term" value="F:cysteine-tRNA ligase activity"/>
    <property type="evidence" value="ECO:0007669"/>
    <property type="project" value="UniProtKB-UniRule"/>
</dbReference>
<dbReference type="GO" id="GO:0008270">
    <property type="term" value="F:zinc ion binding"/>
    <property type="evidence" value="ECO:0007669"/>
    <property type="project" value="UniProtKB-UniRule"/>
</dbReference>
<dbReference type="GO" id="GO:0006423">
    <property type="term" value="P:cysteinyl-tRNA aminoacylation"/>
    <property type="evidence" value="ECO:0007669"/>
    <property type="project" value="UniProtKB-UniRule"/>
</dbReference>
<dbReference type="CDD" id="cd07963">
    <property type="entry name" value="Anticodon_Ia_Cys"/>
    <property type="match status" value="1"/>
</dbReference>
<dbReference type="CDD" id="cd00672">
    <property type="entry name" value="CysRS_core"/>
    <property type="match status" value="1"/>
</dbReference>
<dbReference type="FunFam" id="3.40.50.620:FF:000009">
    <property type="entry name" value="Cysteine--tRNA ligase"/>
    <property type="match status" value="1"/>
</dbReference>
<dbReference type="Gene3D" id="1.20.120.1910">
    <property type="entry name" value="Cysteine-tRNA ligase, C-terminal anti-codon recognition domain"/>
    <property type="match status" value="1"/>
</dbReference>
<dbReference type="Gene3D" id="3.40.50.620">
    <property type="entry name" value="HUPs"/>
    <property type="match status" value="1"/>
</dbReference>
<dbReference type="HAMAP" id="MF_00041">
    <property type="entry name" value="Cys_tRNA_synth"/>
    <property type="match status" value="1"/>
</dbReference>
<dbReference type="InterPro" id="IPR015803">
    <property type="entry name" value="Cys-tRNA-ligase"/>
</dbReference>
<dbReference type="InterPro" id="IPR015273">
    <property type="entry name" value="Cys-tRNA-synt_Ia_DALR"/>
</dbReference>
<dbReference type="InterPro" id="IPR024909">
    <property type="entry name" value="Cys-tRNA/MSH_ligase"/>
</dbReference>
<dbReference type="InterPro" id="IPR056411">
    <property type="entry name" value="CysS_C"/>
</dbReference>
<dbReference type="InterPro" id="IPR014729">
    <property type="entry name" value="Rossmann-like_a/b/a_fold"/>
</dbReference>
<dbReference type="InterPro" id="IPR032678">
    <property type="entry name" value="tRNA-synt_1_cat_dom"/>
</dbReference>
<dbReference type="InterPro" id="IPR009080">
    <property type="entry name" value="tRNAsynth_Ia_anticodon-bd"/>
</dbReference>
<dbReference type="NCBIfam" id="TIGR00435">
    <property type="entry name" value="cysS"/>
    <property type="match status" value="1"/>
</dbReference>
<dbReference type="PANTHER" id="PTHR10890:SF3">
    <property type="entry name" value="CYSTEINE--TRNA LIGASE, CYTOPLASMIC"/>
    <property type="match status" value="1"/>
</dbReference>
<dbReference type="PANTHER" id="PTHR10890">
    <property type="entry name" value="CYSTEINYL-TRNA SYNTHETASE"/>
    <property type="match status" value="1"/>
</dbReference>
<dbReference type="Pfam" id="PF23493">
    <property type="entry name" value="CysS_C"/>
    <property type="match status" value="1"/>
</dbReference>
<dbReference type="Pfam" id="PF09190">
    <property type="entry name" value="DALR_2"/>
    <property type="match status" value="1"/>
</dbReference>
<dbReference type="Pfam" id="PF01406">
    <property type="entry name" value="tRNA-synt_1e"/>
    <property type="match status" value="1"/>
</dbReference>
<dbReference type="PRINTS" id="PR00983">
    <property type="entry name" value="TRNASYNTHCYS"/>
</dbReference>
<dbReference type="SMART" id="SM00840">
    <property type="entry name" value="DALR_2"/>
    <property type="match status" value="1"/>
</dbReference>
<dbReference type="SUPFAM" id="SSF47323">
    <property type="entry name" value="Anticodon-binding domain of a subclass of class I aminoacyl-tRNA synthetases"/>
    <property type="match status" value="1"/>
</dbReference>
<dbReference type="SUPFAM" id="SSF52374">
    <property type="entry name" value="Nucleotidylyl transferase"/>
    <property type="match status" value="1"/>
</dbReference>
<keyword id="KW-0030">Aminoacyl-tRNA synthetase</keyword>
<keyword id="KW-0067">ATP-binding</keyword>
<keyword id="KW-0963">Cytoplasm</keyword>
<keyword id="KW-0436">Ligase</keyword>
<keyword id="KW-0479">Metal-binding</keyword>
<keyword id="KW-0547">Nucleotide-binding</keyword>
<keyword id="KW-0648">Protein biosynthesis</keyword>
<keyword id="KW-0862">Zinc</keyword>
<protein>
    <recommendedName>
        <fullName evidence="1">Cysteine--tRNA ligase</fullName>
        <ecNumber evidence="1">6.1.1.16</ecNumber>
    </recommendedName>
    <alternativeName>
        <fullName evidence="1">Cysteinyl-tRNA synthetase</fullName>
        <shortName evidence="1">CysRS</shortName>
    </alternativeName>
</protein>
<name>SYC_LEGPC</name>
<accession>A5IBG0</accession>
<gene>
    <name evidence="1" type="primary">cysS</name>
    <name type="ordered locus">LPC_0732</name>
</gene>